<feature type="chain" id="PRO_0000051716" description="Cytochrome P450 2C28">
    <location>
        <begin position="1"/>
        <end position="490"/>
    </location>
</feature>
<feature type="binding site" description="axial binding residue" evidence="1">
    <location>
        <position position="435"/>
    </location>
    <ligand>
        <name>heme</name>
        <dbReference type="ChEBI" id="CHEBI:30413"/>
    </ligand>
    <ligandPart>
        <name>Fe</name>
        <dbReference type="ChEBI" id="CHEBI:18248"/>
    </ligandPart>
</feature>
<feature type="modified residue" description="Phosphoserine" evidence="2">
    <location>
        <position position="127"/>
    </location>
</feature>
<feature type="modified residue" description="N6-acetyllysine" evidence="3">
    <location>
        <position position="249"/>
    </location>
</feature>
<feature type="modified residue" description="N6-acetyllysine" evidence="3">
    <location>
        <position position="375"/>
    </location>
</feature>
<sequence length="490" mass="55703">MDPVLVLVLTLSCLLLFSVWRQSSGRGRLPPGPTPLPLIGNILQIDIKDISKSLANFSKVYGPVFTLYFGTKPTVVVHGYEAVKEALEDLGEEFSGRGNFPIVERMNSGLGIIFSNGTKWKELRRFSLMTLRNFGMGKRSIEDCIQEEARCLVEELRKTNGSPCDPTFFLSCAPSNVICSVVFHNRFDYNDKNFLNLMEKLNENFEILNSPWLQVCNVIPAFLDYLPGSHNKALKNFAEIKSYILKRVKEHQETLDMNNPRDFIDCFLIKMEKEKDNPHSEFTTESLMATVADVFVAGSETTSTTLRYGLLLLLKHKEVTAKVQKEIDHVIGRDRSPCMQDRTRMPYTDAMVHEVQRYVNLIPNNVPHAATCNVKFRNYVIPKGTDLITSLTSVLHDDKEFPNPKIFDPAHFLDENGNFKKSDYFMPFSIGKRMCMGEALARMELFLLLTTILQNFDLKSLADTKDIDTTPVASTFGCVPPSYQLYFIPR</sequence>
<protein>
    <recommendedName>
        <fullName>Cytochrome P450 2C28</fullName>
        <ecNumber>1.14.14.1</ecNumber>
    </recommendedName>
    <alternativeName>
        <fullName>CYPIIC28</fullName>
    </alternativeName>
    <alternativeName>
        <fullName>Cytochrome P450 HSM4</fullName>
    </alternativeName>
</protein>
<keyword id="KW-0007">Acetylation</keyword>
<keyword id="KW-0256">Endoplasmic reticulum</keyword>
<keyword id="KW-0349">Heme</keyword>
<keyword id="KW-0408">Iron</keyword>
<keyword id="KW-0472">Membrane</keyword>
<keyword id="KW-0479">Metal-binding</keyword>
<keyword id="KW-0492">Microsome</keyword>
<keyword id="KW-0503">Monooxygenase</keyword>
<keyword id="KW-0560">Oxidoreductase</keyword>
<keyword id="KW-0597">Phosphoprotein</keyword>
<keyword id="KW-1185">Reference proteome</keyword>
<accession>P33265</accession>
<gene>
    <name type="primary">CYP2C28</name>
</gene>
<comment type="function">
    <text>Catalyzes the N-demethylation of aminopyrine and benzphetamine, but does not catalyze the hydroxylation of tolbutamide, testosterone, and progesterone.</text>
</comment>
<comment type="catalytic activity">
    <reaction>
        <text>an organic molecule + reduced [NADPH--hemoprotein reductase] + O2 = an alcohol + oxidized [NADPH--hemoprotein reductase] + H2O + H(+)</text>
        <dbReference type="Rhea" id="RHEA:17149"/>
        <dbReference type="Rhea" id="RHEA-COMP:11964"/>
        <dbReference type="Rhea" id="RHEA-COMP:11965"/>
        <dbReference type="ChEBI" id="CHEBI:15377"/>
        <dbReference type="ChEBI" id="CHEBI:15378"/>
        <dbReference type="ChEBI" id="CHEBI:15379"/>
        <dbReference type="ChEBI" id="CHEBI:30879"/>
        <dbReference type="ChEBI" id="CHEBI:57618"/>
        <dbReference type="ChEBI" id="CHEBI:58210"/>
        <dbReference type="ChEBI" id="CHEBI:142491"/>
        <dbReference type="EC" id="1.14.14.1"/>
    </reaction>
</comment>
<comment type="cofactor">
    <cofactor evidence="1">
        <name>heme</name>
        <dbReference type="ChEBI" id="CHEBI:30413"/>
    </cofactor>
</comment>
<comment type="subcellular location">
    <subcellularLocation>
        <location>Endoplasmic reticulum membrane</location>
        <topology>Peripheral membrane protein</topology>
    </subcellularLocation>
    <subcellularLocation>
        <location>Microsome membrane</location>
        <topology>Peripheral membrane protein</topology>
    </subcellularLocation>
</comment>
<comment type="tissue specificity">
    <text>Liver.</text>
</comment>
<comment type="induction">
    <text>P450 can be induced to high levels in liver and other tissues by various foreign compounds, including drugs, pesticides, and carcinogens.</text>
</comment>
<comment type="similarity">
    <text evidence="4">Belongs to the cytochrome P450 family.</text>
</comment>
<dbReference type="EC" id="1.14.14.1"/>
<dbReference type="EMBL" id="D11437">
    <property type="protein sequence ID" value="BAA02003.1"/>
    <property type="molecule type" value="mRNA"/>
</dbReference>
<dbReference type="PIR" id="I48164">
    <property type="entry name" value="I48164"/>
</dbReference>
<dbReference type="RefSeq" id="NP_001268612.1">
    <property type="nucleotide sequence ID" value="NM_001281683.1"/>
</dbReference>
<dbReference type="SMR" id="P33265"/>
<dbReference type="STRING" id="10036.ENSMAUP00000004849"/>
<dbReference type="Ensembl" id="ENSMAUT00000007947">
    <property type="protein sequence ID" value="ENSMAUP00000004849"/>
    <property type="gene ID" value="ENSMAUG00000006548"/>
</dbReference>
<dbReference type="GeneID" id="101832144"/>
<dbReference type="KEGG" id="ag:BAA02003"/>
<dbReference type="KEGG" id="maua:101832144"/>
<dbReference type="eggNOG" id="KOG0156">
    <property type="taxonomic scope" value="Eukaryota"/>
</dbReference>
<dbReference type="OrthoDB" id="1103324at2759"/>
<dbReference type="Proteomes" id="UP000189706">
    <property type="component" value="Unplaced"/>
</dbReference>
<dbReference type="GO" id="GO:0005789">
    <property type="term" value="C:endoplasmic reticulum membrane"/>
    <property type="evidence" value="ECO:0007669"/>
    <property type="project" value="UniProtKB-SubCell"/>
</dbReference>
<dbReference type="GO" id="GO:0008392">
    <property type="term" value="F:arachidonate epoxygenase activity"/>
    <property type="evidence" value="ECO:0007669"/>
    <property type="project" value="Ensembl"/>
</dbReference>
<dbReference type="GO" id="GO:0020037">
    <property type="term" value="F:heme binding"/>
    <property type="evidence" value="ECO:0007669"/>
    <property type="project" value="InterPro"/>
</dbReference>
<dbReference type="GO" id="GO:0005506">
    <property type="term" value="F:iron ion binding"/>
    <property type="evidence" value="ECO:0007669"/>
    <property type="project" value="InterPro"/>
</dbReference>
<dbReference type="GO" id="GO:0071614">
    <property type="term" value="F:linoleic acid epoxygenase activity"/>
    <property type="evidence" value="ECO:0007669"/>
    <property type="project" value="Ensembl"/>
</dbReference>
<dbReference type="GO" id="GO:0016712">
    <property type="term" value="F:oxidoreductase activity, acting on paired donors, with incorporation or reduction of molecular oxygen, reduced flavin or flavoprotein as one donor, and incorporation of one atom of oxygen"/>
    <property type="evidence" value="ECO:0007669"/>
    <property type="project" value="UniProtKB-EC"/>
</dbReference>
<dbReference type="GO" id="GO:0019369">
    <property type="term" value="P:arachidonate metabolic process"/>
    <property type="evidence" value="ECO:0007669"/>
    <property type="project" value="Ensembl"/>
</dbReference>
<dbReference type="GO" id="GO:0043651">
    <property type="term" value="P:linoleic acid metabolic process"/>
    <property type="evidence" value="ECO:0007669"/>
    <property type="project" value="Ensembl"/>
</dbReference>
<dbReference type="GO" id="GO:0006805">
    <property type="term" value="P:xenobiotic metabolic process"/>
    <property type="evidence" value="ECO:0007669"/>
    <property type="project" value="TreeGrafter"/>
</dbReference>
<dbReference type="CDD" id="cd20665">
    <property type="entry name" value="CYP2C-like"/>
    <property type="match status" value="1"/>
</dbReference>
<dbReference type="FunFam" id="1.10.630.10:FF:000299">
    <property type="entry name" value="Cytochrome P450 2C9"/>
    <property type="match status" value="1"/>
</dbReference>
<dbReference type="Gene3D" id="1.10.630.10">
    <property type="entry name" value="Cytochrome P450"/>
    <property type="match status" value="1"/>
</dbReference>
<dbReference type="InterPro" id="IPR001128">
    <property type="entry name" value="Cyt_P450"/>
</dbReference>
<dbReference type="InterPro" id="IPR017972">
    <property type="entry name" value="Cyt_P450_CS"/>
</dbReference>
<dbReference type="InterPro" id="IPR002401">
    <property type="entry name" value="Cyt_P450_E_grp-I"/>
</dbReference>
<dbReference type="InterPro" id="IPR036396">
    <property type="entry name" value="Cyt_P450_sf"/>
</dbReference>
<dbReference type="InterPro" id="IPR050182">
    <property type="entry name" value="Cytochrome_P450_fam2"/>
</dbReference>
<dbReference type="PANTHER" id="PTHR24300:SF423">
    <property type="entry name" value="CYTOCHROME P450 2C18"/>
    <property type="match status" value="1"/>
</dbReference>
<dbReference type="PANTHER" id="PTHR24300">
    <property type="entry name" value="CYTOCHROME P450 508A4-RELATED"/>
    <property type="match status" value="1"/>
</dbReference>
<dbReference type="Pfam" id="PF00067">
    <property type="entry name" value="p450"/>
    <property type="match status" value="1"/>
</dbReference>
<dbReference type="PRINTS" id="PR00463">
    <property type="entry name" value="EP450I"/>
</dbReference>
<dbReference type="PRINTS" id="PR00385">
    <property type="entry name" value="P450"/>
</dbReference>
<dbReference type="SUPFAM" id="SSF48264">
    <property type="entry name" value="Cytochrome P450"/>
    <property type="match status" value="1"/>
</dbReference>
<dbReference type="PROSITE" id="PS00086">
    <property type="entry name" value="CYTOCHROME_P450"/>
    <property type="match status" value="1"/>
</dbReference>
<name>CP2CS_MESAU</name>
<proteinExistence type="evidence at transcript level"/>
<reference key="1">
    <citation type="journal article" date="1995" name="Arch. Biochem. Biophys.">
        <title>Isolation and characterization of a new cDNA clone belonging to the cytochrome P450 2C gene subfamily in hamsters.</title>
        <authorList>
            <person name="Sakuma T."/>
            <person name="Yokoi T."/>
            <person name="Kamataki T."/>
        </authorList>
    </citation>
    <scope>NUCLEOTIDE SEQUENCE [MRNA]</scope>
    <source>
        <tissue>Liver</tissue>
    </source>
</reference>
<evidence type="ECO:0000250" key="1"/>
<evidence type="ECO:0000250" key="2">
    <source>
        <dbReference type="UniProtKB" id="P00176"/>
    </source>
</evidence>
<evidence type="ECO:0000250" key="3">
    <source>
        <dbReference type="UniProtKB" id="Q64458"/>
    </source>
</evidence>
<evidence type="ECO:0000305" key="4"/>
<organism>
    <name type="scientific">Mesocricetus auratus</name>
    <name type="common">Golden hamster</name>
    <dbReference type="NCBI Taxonomy" id="10036"/>
    <lineage>
        <taxon>Eukaryota</taxon>
        <taxon>Metazoa</taxon>
        <taxon>Chordata</taxon>
        <taxon>Craniata</taxon>
        <taxon>Vertebrata</taxon>
        <taxon>Euteleostomi</taxon>
        <taxon>Mammalia</taxon>
        <taxon>Eutheria</taxon>
        <taxon>Euarchontoglires</taxon>
        <taxon>Glires</taxon>
        <taxon>Rodentia</taxon>
        <taxon>Myomorpha</taxon>
        <taxon>Muroidea</taxon>
        <taxon>Cricetidae</taxon>
        <taxon>Cricetinae</taxon>
        <taxon>Mesocricetus</taxon>
    </lineage>
</organism>